<gene>
    <name evidence="1" type="primary">murG</name>
    <name type="ordered locus">Lferr_0385</name>
</gene>
<sequence>MADSVLIAAGGTGGHVFPALAVADALRAQGVEVTFAGTATGMEARLVPERGYTLHTLDMQGLRGKGIRRWLRAPWRVSRAILQARRILRQTRSHVVLGMGGYVTAPVGIAAWTLGRPLCLHEQNAVAGLSNRLLAPLARRVFLGFPGARLARGEWVGNPVREAIHALPTPQERFHDRKGPVRLLIMGGSQGAQVLNAVSAAALSGMTDAERPAIWHQTGRDHAESTRAAYAQARIDAKVEPFIDDMAAALGWADLALCRAGAATIAELAAAGLGAILIPFPFAVDDHQAANARFLEKAGAARMLRQEGLDALQLRDVLRPLLADPELRLRWAEAARRQAKGDAAATVAAACIECAGGIDA</sequence>
<evidence type="ECO:0000255" key="1">
    <source>
        <dbReference type="HAMAP-Rule" id="MF_00033"/>
    </source>
</evidence>
<feature type="chain" id="PRO_1000116466" description="UDP-N-acetylglucosamine--N-acetylmuramyl-(pentapeptide) pyrophosphoryl-undecaprenol N-acetylglucosamine transferase">
    <location>
        <begin position="1"/>
        <end position="360"/>
    </location>
</feature>
<feature type="binding site" evidence="1">
    <location>
        <begin position="12"/>
        <end position="14"/>
    </location>
    <ligand>
        <name>UDP-N-acetyl-alpha-D-glucosamine</name>
        <dbReference type="ChEBI" id="CHEBI:57705"/>
    </ligand>
</feature>
<feature type="binding site" evidence="1">
    <location>
        <position position="124"/>
    </location>
    <ligand>
        <name>UDP-N-acetyl-alpha-D-glucosamine</name>
        <dbReference type="ChEBI" id="CHEBI:57705"/>
    </ligand>
</feature>
<feature type="binding site" evidence="1">
    <location>
        <position position="161"/>
    </location>
    <ligand>
        <name>UDP-N-acetyl-alpha-D-glucosamine</name>
        <dbReference type="ChEBI" id="CHEBI:57705"/>
    </ligand>
</feature>
<feature type="binding site" evidence="1">
    <location>
        <position position="189"/>
    </location>
    <ligand>
        <name>UDP-N-acetyl-alpha-D-glucosamine</name>
        <dbReference type="ChEBI" id="CHEBI:57705"/>
    </ligand>
</feature>
<feature type="binding site" evidence="1">
    <location>
        <position position="243"/>
    </location>
    <ligand>
        <name>UDP-N-acetyl-alpha-D-glucosamine</name>
        <dbReference type="ChEBI" id="CHEBI:57705"/>
    </ligand>
</feature>
<feature type="binding site" evidence="1">
    <location>
        <position position="288"/>
    </location>
    <ligand>
        <name>UDP-N-acetyl-alpha-D-glucosamine</name>
        <dbReference type="ChEBI" id="CHEBI:57705"/>
    </ligand>
</feature>
<accession>B5ELC3</accession>
<reference key="1">
    <citation type="submission" date="2008-08" db="EMBL/GenBank/DDBJ databases">
        <title>Complete sequence of Acidithiobacillus ferrooxidans ATCC 53993.</title>
        <authorList>
            <person name="Lucas S."/>
            <person name="Copeland A."/>
            <person name="Lapidus A."/>
            <person name="Glavina del Rio T."/>
            <person name="Dalin E."/>
            <person name="Tice H."/>
            <person name="Bruce D."/>
            <person name="Goodwin L."/>
            <person name="Pitluck S."/>
            <person name="Sims D."/>
            <person name="Brettin T."/>
            <person name="Detter J.C."/>
            <person name="Han C."/>
            <person name="Kuske C.R."/>
            <person name="Larimer F."/>
            <person name="Land M."/>
            <person name="Hauser L."/>
            <person name="Kyrpides N."/>
            <person name="Lykidis A."/>
            <person name="Borole A.P."/>
        </authorList>
    </citation>
    <scope>NUCLEOTIDE SEQUENCE [LARGE SCALE GENOMIC DNA]</scope>
    <source>
        <strain>ATCC 53993 / BNL-5-31</strain>
    </source>
</reference>
<name>MURG_ACIF5</name>
<proteinExistence type="inferred from homology"/>
<dbReference type="EC" id="2.4.1.227" evidence="1"/>
<dbReference type="EMBL" id="CP001132">
    <property type="protein sequence ID" value="ACH82639.1"/>
    <property type="molecule type" value="Genomic_DNA"/>
</dbReference>
<dbReference type="RefSeq" id="WP_012536019.1">
    <property type="nucleotide sequence ID" value="NC_011206.1"/>
</dbReference>
<dbReference type="SMR" id="B5ELC3"/>
<dbReference type="CAZy" id="GT28">
    <property type="family name" value="Glycosyltransferase Family 28"/>
</dbReference>
<dbReference type="GeneID" id="65279591"/>
<dbReference type="KEGG" id="afe:Lferr_0385"/>
<dbReference type="eggNOG" id="COG0707">
    <property type="taxonomic scope" value="Bacteria"/>
</dbReference>
<dbReference type="HOGENOM" id="CLU_037404_2_0_6"/>
<dbReference type="UniPathway" id="UPA00219"/>
<dbReference type="GO" id="GO:0005886">
    <property type="term" value="C:plasma membrane"/>
    <property type="evidence" value="ECO:0007669"/>
    <property type="project" value="UniProtKB-SubCell"/>
</dbReference>
<dbReference type="GO" id="GO:0051991">
    <property type="term" value="F:UDP-N-acetyl-D-glucosamine:N-acetylmuramoyl-L-alanyl-D-glutamyl-meso-2,6-diaminopimelyl-D-alanyl-D-alanine-diphosphoundecaprenol 4-beta-N-acetylglucosaminlytransferase activity"/>
    <property type="evidence" value="ECO:0007669"/>
    <property type="project" value="RHEA"/>
</dbReference>
<dbReference type="GO" id="GO:0050511">
    <property type="term" value="F:undecaprenyldiphospho-muramoylpentapeptide beta-N-acetylglucosaminyltransferase activity"/>
    <property type="evidence" value="ECO:0007669"/>
    <property type="project" value="UniProtKB-UniRule"/>
</dbReference>
<dbReference type="GO" id="GO:0005975">
    <property type="term" value="P:carbohydrate metabolic process"/>
    <property type="evidence" value="ECO:0007669"/>
    <property type="project" value="InterPro"/>
</dbReference>
<dbReference type="GO" id="GO:0051301">
    <property type="term" value="P:cell division"/>
    <property type="evidence" value="ECO:0007669"/>
    <property type="project" value="UniProtKB-KW"/>
</dbReference>
<dbReference type="GO" id="GO:0071555">
    <property type="term" value="P:cell wall organization"/>
    <property type="evidence" value="ECO:0007669"/>
    <property type="project" value="UniProtKB-KW"/>
</dbReference>
<dbReference type="GO" id="GO:0030259">
    <property type="term" value="P:lipid glycosylation"/>
    <property type="evidence" value="ECO:0007669"/>
    <property type="project" value="UniProtKB-UniRule"/>
</dbReference>
<dbReference type="GO" id="GO:0009252">
    <property type="term" value="P:peptidoglycan biosynthetic process"/>
    <property type="evidence" value="ECO:0007669"/>
    <property type="project" value="UniProtKB-UniRule"/>
</dbReference>
<dbReference type="GO" id="GO:0008360">
    <property type="term" value="P:regulation of cell shape"/>
    <property type="evidence" value="ECO:0007669"/>
    <property type="project" value="UniProtKB-KW"/>
</dbReference>
<dbReference type="CDD" id="cd03785">
    <property type="entry name" value="GT28_MurG"/>
    <property type="match status" value="1"/>
</dbReference>
<dbReference type="Gene3D" id="3.40.50.2000">
    <property type="entry name" value="Glycogen Phosphorylase B"/>
    <property type="match status" value="2"/>
</dbReference>
<dbReference type="HAMAP" id="MF_00033">
    <property type="entry name" value="MurG"/>
    <property type="match status" value="1"/>
</dbReference>
<dbReference type="InterPro" id="IPR006009">
    <property type="entry name" value="GlcNAc_MurG"/>
</dbReference>
<dbReference type="InterPro" id="IPR007235">
    <property type="entry name" value="Glyco_trans_28_C"/>
</dbReference>
<dbReference type="InterPro" id="IPR004276">
    <property type="entry name" value="GlycoTrans_28_N"/>
</dbReference>
<dbReference type="NCBIfam" id="TIGR01133">
    <property type="entry name" value="murG"/>
    <property type="match status" value="1"/>
</dbReference>
<dbReference type="PANTHER" id="PTHR21015:SF22">
    <property type="entry name" value="GLYCOSYLTRANSFERASE"/>
    <property type="match status" value="1"/>
</dbReference>
<dbReference type="PANTHER" id="PTHR21015">
    <property type="entry name" value="UDP-N-ACETYLGLUCOSAMINE--N-ACETYLMURAMYL-(PENTAPEPTIDE) PYROPHOSPHORYL-UNDECAPRENOL N-ACETYLGLUCOSAMINE TRANSFERASE 1"/>
    <property type="match status" value="1"/>
</dbReference>
<dbReference type="Pfam" id="PF04101">
    <property type="entry name" value="Glyco_tran_28_C"/>
    <property type="match status" value="1"/>
</dbReference>
<dbReference type="Pfam" id="PF03033">
    <property type="entry name" value="Glyco_transf_28"/>
    <property type="match status" value="1"/>
</dbReference>
<dbReference type="SUPFAM" id="SSF53756">
    <property type="entry name" value="UDP-Glycosyltransferase/glycogen phosphorylase"/>
    <property type="match status" value="1"/>
</dbReference>
<organism>
    <name type="scientific">Acidithiobacillus ferrooxidans (strain ATCC 53993 / BNL-5-31)</name>
    <name type="common">Leptospirillum ferrooxidans (ATCC 53993)</name>
    <dbReference type="NCBI Taxonomy" id="380394"/>
    <lineage>
        <taxon>Bacteria</taxon>
        <taxon>Pseudomonadati</taxon>
        <taxon>Pseudomonadota</taxon>
        <taxon>Acidithiobacillia</taxon>
        <taxon>Acidithiobacillales</taxon>
        <taxon>Acidithiobacillaceae</taxon>
        <taxon>Acidithiobacillus</taxon>
    </lineage>
</organism>
<keyword id="KW-0131">Cell cycle</keyword>
<keyword id="KW-0132">Cell division</keyword>
<keyword id="KW-0997">Cell inner membrane</keyword>
<keyword id="KW-1003">Cell membrane</keyword>
<keyword id="KW-0133">Cell shape</keyword>
<keyword id="KW-0961">Cell wall biogenesis/degradation</keyword>
<keyword id="KW-0328">Glycosyltransferase</keyword>
<keyword id="KW-0472">Membrane</keyword>
<keyword id="KW-0573">Peptidoglycan synthesis</keyword>
<keyword id="KW-0808">Transferase</keyword>
<protein>
    <recommendedName>
        <fullName evidence="1">UDP-N-acetylglucosamine--N-acetylmuramyl-(pentapeptide) pyrophosphoryl-undecaprenol N-acetylglucosamine transferase</fullName>
        <ecNumber evidence="1">2.4.1.227</ecNumber>
    </recommendedName>
    <alternativeName>
        <fullName evidence="1">Undecaprenyl-PP-MurNAc-pentapeptide-UDPGlcNAc GlcNAc transferase</fullName>
    </alternativeName>
</protein>
<comment type="function">
    <text evidence="1">Cell wall formation. Catalyzes the transfer of a GlcNAc subunit on undecaprenyl-pyrophosphoryl-MurNAc-pentapeptide (lipid intermediate I) to form undecaprenyl-pyrophosphoryl-MurNAc-(pentapeptide)GlcNAc (lipid intermediate II).</text>
</comment>
<comment type="catalytic activity">
    <reaction evidence="1">
        <text>di-trans,octa-cis-undecaprenyl diphospho-N-acetyl-alpha-D-muramoyl-L-alanyl-D-glutamyl-meso-2,6-diaminopimeloyl-D-alanyl-D-alanine + UDP-N-acetyl-alpha-D-glucosamine = di-trans,octa-cis-undecaprenyl diphospho-[N-acetyl-alpha-D-glucosaminyl-(1-&gt;4)]-N-acetyl-alpha-D-muramoyl-L-alanyl-D-glutamyl-meso-2,6-diaminopimeloyl-D-alanyl-D-alanine + UDP + H(+)</text>
        <dbReference type="Rhea" id="RHEA:31227"/>
        <dbReference type="ChEBI" id="CHEBI:15378"/>
        <dbReference type="ChEBI" id="CHEBI:57705"/>
        <dbReference type="ChEBI" id="CHEBI:58223"/>
        <dbReference type="ChEBI" id="CHEBI:61387"/>
        <dbReference type="ChEBI" id="CHEBI:61388"/>
        <dbReference type="EC" id="2.4.1.227"/>
    </reaction>
</comment>
<comment type="pathway">
    <text evidence="1">Cell wall biogenesis; peptidoglycan biosynthesis.</text>
</comment>
<comment type="subcellular location">
    <subcellularLocation>
        <location evidence="1">Cell inner membrane</location>
        <topology evidence="1">Peripheral membrane protein</topology>
        <orientation evidence="1">Cytoplasmic side</orientation>
    </subcellularLocation>
</comment>
<comment type="similarity">
    <text evidence="1">Belongs to the glycosyltransferase 28 family. MurG subfamily.</text>
</comment>